<organism>
    <name type="scientific">Leptospira interrogans serogroup Icterohaemorrhagiae serovar Lai (strain 56601)</name>
    <dbReference type="NCBI Taxonomy" id="189518"/>
    <lineage>
        <taxon>Bacteria</taxon>
        <taxon>Pseudomonadati</taxon>
        <taxon>Spirochaetota</taxon>
        <taxon>Spirochaetia</taxon>
        <taxon>Leptospirales</taxon>
        <taxon>Leptospiraceae</taxon>
        <taxon>Leptospira</taxon>
    </lineage>
</organism>
<gene>
    <name evidence="1" type="primary">rpmF</name>
    <name type="ordered locus">LA_1263</name>
</gene>
<name>RL32_LEPIN</name>
<accession>Q8F6P0</accession>
<sequence length="66" mass="7538">MAVPKRRKSKSKVRTKRAHHAIGKPNLVPCPNCNSYRLPHRICPTCGFYKTGIVLEPKVKKPKEEN</sequence>
<comment type="similarity">
    <text evidence="1">Belongs to the bacterial ribosomal protein bL32 family.</text>
</comment>
<evidence type="ECO:0000255" key="1">
    <source>
        <dbReference type="HAMAP-Rule" id="MF_00340"/>
    </source>
</evidence>
<evidence type="ECO:0000305" key="2"/>
<proteinExistence type="inferred from homology"/>
<feature type="chain" id="PRO_0000172356" description="Large ribosomal subunit protein bL32">
    <location>
        <begin position="1"/>
        <end position="66"/>
    </location>
</feature>
<reference key="1">
    <citation type="journal article" date="2003" name="Nature">
        <title>Unique physiological and pathogenic features of Leptospira interrogans revealed by whole-genome sequencing.</title>
        <authorList>
            <person name="Ren S.-X."/>
            <person name="Fu G."/>
            <person name="Jiang X.-G."/>
            <person name="Zeng R."/>
            <person name="Miao Y.-G."/>
            <person name="Xu H."/>
            <person name="Zhang Y.-X."/>
            <person name="Xiong H."/>
            <person name="Lu G."/>
            <person name="Lu L.-F."/>
            <person name="Jiang H.-Q."/>
            <person name="Jia J."/>
            <person name="Tu Y.-F."/>
            <person name="Jiang J.-X."/>
            <person name="Gu W.-Y."/>
            <person name="Zhang Y.-Q."/>
            <person name="Cai Z."/>
            <person name="Sheng H.-H."/>
            <person name="Yin H.-F."/>
            <person name="Zhang Y."/>
            <person name="Zhu G.-F."/>
            <person name="Wan M."/>
            <person name="Huang H.-L."/>
            <person name="Qian Z."/>
            <person name="Wang S.-Y."/>
            <person name="Ma W."/>
            <person name="Yao Z.-J."/>
            <person name="Shen Y."/>
            <person name="Qiang B.-Q."/>
            <person name="Xia Q.-C."/>
            <person name="Guo X.-K."/>
            <person name="Danchin A."/>
            <person name="Saint Girons I."/>
            <person name="Somerville R.L."/>
            <person name="Wen Y.-M."/>
            <person name="Shi M.-H."/>
            <person name="Chen Z."/>
            <person name="Xu J.-G."/>
            <person name="Zhao G.-P."/>
        </authorList>
    </citation>
    <scope>NUCLEOTIDE SEQUENCE [LARGE SCALE GENOMIC DNA]</scope>
    <source>
        <strain>56601</strain>
    </source>
</reference>
<dbReference type="EMBL" id="AE010300">
    <property type="protein sequence ID" value="AAN48462.1"/>
    <property type="molecule type" value="Genomic_DNA"/>
</dbReference>
<dbReference type="RefSeq" id="NP_711444.1">
    <property type="nucleotide sequence ID" value="NC_004342.2"/>
</dbReference>
<dbReference type="RefSeq" id="WP_000290471.1">
    <property type="nucleotide sequence ID" value="NC_004342.2"/>
</dbReference>
<dbReference type="SMR" id="Q8F6P0"/>
<dbReference type="STRING" id="189518.LA_1263"/>
<dbReference type="PaxDb" id="189518-LA_1263"/>
<dbReference type="EnsemblBacteria" id="AAN48462">
    <property type="protein sequence ID" value="AAN48462"/>
    <property type="gene ID" value="LA_1263"/>
</dbReference>
<dbReference type="GeneID" id="61142320"/>
<dbReference type="KEGG" id="lil:LA_1263"/>
<dbReference type="PATRIC" id="fig|189518.3.peg.1264"/>
<dbReference type="HOGENOM" id="CLU_129084_1_3_12"/>
<dbReference type="InParanoid" id="Q8F6P0"/>
<dbReference type="OrthoDB" id="9812874at2"/>
<dbReference type="PRO" id="PR:Q8F6P0"/>
<dbReference type="Proteomes" id="UP000001408">
    <property type="component" value="Chromosome I"/>
</dbReference>
<dbReference type="GO" id="GO:0022625">
    <property type="term" value="C:cytosolic large ribosomal subunit"/>
    <property type="evidence" value="ECO:0000318"/>
    <property type="project" value="GO_Central"/>
</dbReference>
<dbReference type="GO" id="GO:0003735">
    <property type="term" value="F:structural constituent of ribosome"/>
    <property type="evidence" value="ECO:0000318"/>
    <property type="project" value="GO_Central"/>
</dbReference>
<dbReference type="GO" id="GO:0006412">
    <property type="term" value="P:translation"/>
    <property type="evidence" value="ECO:0007669"/>
    <property type="project" value="UniProtKB-UniRule"/>
</dbReference>
<dbReference type="HAMAP" id="MF_00340">
    <property type="entry name" value="Ribosomal_bL32"/>
    <property type="match status" value="1"/>
</dbReference>
<dbReference type="InterPro" id="IPR002677">
    <property type="entry name" value="Ribosomal_bL32"/>
</dbReference>
<dbReference type="InterPro" id="IPR044957">
    <property type="entry name" value="Ribosomal_bL32_bact"/>
</dbReference>
<dbReference type="InterPro" id="IPR011332">
    <property type="entry name" value="Ribosomal_zn-bd"/>
</dbReference>
<dbReference type="NCBIfam" id="TIGR01031">
    <property type="entry name" value="rpmF_bact"/>
    <property type="match status" value="1"/>
</dbReference>
<dbReference type="PANTHER" id="PTHR35534">
    <property type="entry name" value="50S RIBOSOMAL PROTEIN L32"/>
    <property type="match status" value="1"/>
</dbReference>
<dbReference type="PANTHER" id="PTHR35534:SF1">
    <property type="entry name" value="LARGE RIBOSOMAL SUBUNIT PROTEIN BL32"/>
    <property type="match status" value="1"/>
</dbReference>
<dbReference type="Pfam" id="PF01783">
    <property type="entry name" value="Ribosomal_L32p"/>
    <property type="match status" value="1"/>
</dbReference>
<dbReference type="SUPFAM" id="SSF57829">
    <property type="entry name" value="Zn-binding ribosomal proteins"/>
    <property type="match status" value="1"/>
</dbReference>
<protein>
    <recommendedName>
        <fullName evidence="1">Large ribosomal subunit protein bL32</fullName>
    </recommendedName>
    <alternativeName>
        <fullName evidence="2">50S ribosomal protein L32</fullName>
    </alternativeName>
</protein>
<keyword id="KW-1185">Reference proteome</keyword>
<keyword id="KW-0687">Ribonucleoprotein</keyword>
<keyword id="KW-0689">Ribosomal protein</keyword>